<accession>Q9UK61</accession>
<accession>A1L3A4</accession>
<accession>B5ME28</accession>
<accession>Q9H2F7</accession>
<accession>Q9UPP7</accession>
<sequence length="1670" mass="189032">MATAVETEACQPTDASWESGGGGDDEMKQALPELESSQQNGGGGGLNIAEPSGGAGREENAGAEAAQSLSHEQPQDSSEAGAAALPRGPEEPERPVRRSFQIPRKSREKKALFQPLTPGSREFEDVVNILHSSYLEPTSVTNFNYRRACLVHNELLEKEFTEKRRELKFDGRLDKELSESYAFLMVDRYQVQTICEKGLHVGQSKITILGSPSMGVYLSRYADLLQANPLDTGAMGDVVIFKIMKGKIKSIYDPMGVKSLESMLNKSALDPTPKHECHVSKNANRITSLLAYRAYELTQYYFYEYGFDELRRRPRHVCPYAVVSFTYKDDIQTPKFVPSSRSNSFNTDRNIDKYNYTLWKGQLLNKGKLLCYISLRSATRAFLPIKLPEKLDVETVMSIDHLKQKIPPALFYKETYLGPNEVLKNGMYCSLYEVVEKTRIGSNMESLLQKLDREKLVLVKPLGDRGYLFLLSPYQMVPPYEYQTAKSRVLHALFLFQEPRSIVTSQKGSTNAAPQERHESMPDVLKIAQFLQFSLIQCRKEFKNISAINFHSVVEKYVSEFFKRGFGSGKREFIMFPYDSRLDDKKFLYSAPRNKSHIDTCLHAYIFRPEVYQLPICKLKELFEENRKLQQFSPLSDYEGQEEEMNGTKMKFGKRNNSRGEAIISGKQRSSHSLDYDKDRVKELINLIQCRKKSVGGDSDTEDMRSKTVLKRKLEDLPENMRKLAKTSNLSENCHLYEESPQPIGSLGHDADLRRQQQDTCNSGIADIHRLFNWLSETLANARHSDASLTDTVNKALGLSTDDAYEELRQKHEYELNSTPDKKDYEQPTCAKVENAQFKGTQSLLLEVDATSKYSVAISTSEVGTDHKLHLKEDPNLISVNNFEDCSLCPSVPIEHGFRRQQSKSNNVEETEIHWKLIPITGGNARSPEDQLGKHGEKQTPGMKSPEEQLVCVPPQEAFPNDPRVINRQRSSDYQFPSSPFTDTLKGTTEDDVLTGQVEEQCVPAAEAEPPAVSETTERTVLGEYNLFSRKIEEILKQKNVSYVSTVSTPIFSTQEKMKRLSEFIYSKTSKAGVQEFVDGLHEKLNTIIIKASAKGGNLPPVSPNDSGAKIASNPLERHVIPVSSSDFNNKHLLEPLCSDPLKDTNSDEQHSTSALTEVEMNQPQHATELMVTSDHIVPGDMAREPVEETTKSPSDVNISAQPALSNFISQLEPEVFNSLVKIMKDVQKNTVKFYIHEEEESVLCKEIKEYLIKLGNTECHPEQFLERRSKLDKLLIIIQNEDIAGFIHKIPGLVTLKKLPCVSFAGVDSLDDVKNHTYNELFVSGGFIVSDESILNPEVVTVENLKNFLTFLEELSTPEGKWQWKVHCKFQKKLKELGRLNAKALSLLTLLNVYQKKHLVEILSYHNCDSQTRNAPELDCLIRLQAQNIQQRHIVFLTEKNIKMLSSYTDNGIVVATAEDFMQNFKNLVGYHNSITEENLPQLGANENLESQSALLENDEKDEEDMSLDSGDEISHIEVCSNFHSEIWEKETKGSRGTDQKKNTQIELQSSPDVQNSLLEDKTYLDSEERTSIDIVCSEGENSNSTEQDSYSNFQVYHSQLNMSHQFSHFNVLTHQTFLGTPYALSSSQSQENENYFLSAYTESLDRDKSPPPLSWGKSDSSRPYSQEK</sequence>
<gene>
    <name evidence="14 16" type="primary">TASOR</name>
    <name evidence="16" type="synonym">C3orf63</name>
    <name evidence="16" type="synonym">FAM208A</name>
    <name evidence="10" type="synonym">KIAA1105</name>
</gene>
<feature type="initiator methionine" description="Removed" evidence="19">
    <location>
        <position position="1"/>
    </location>
</feature>
<feature type="chain" id="PRO_0000295728" description="Protein TASOR">
    <location>
        <begin position="2"/>
        <end position="1670"/>
    </location>
</feature>
<feature type="region of interest" description="Disordered" evidence="2">
    <location>
        <begin position="1"/>
        <end position="110"/>
    </location>
</feature>
<feature type="region of interest" description="Disordered" evidence="2">
    <location>
        <begin position="921"/>
        <end position="947"/>
    </location>
</feature>
<feature type="region of interest" description="Disordered" evidence="2">
    <location>
        <begin position="1532"/>
        <end position="1558"/>
    </location>
</feature>
<feature type="region of interest" description="Disordered" evidence="2">
    <location>
        <begin position="1638"/>
        <end position="1670"/>
    </location>
</feature>
<feature type="compositionally biased region" description="Polar residues" evidence="2">
    <location>
        <begin position="67"/>
        <end position="78"/>
    </location>
</feature>
<feature type="compositionally biased region" description="Basic and acidic residues" evidence="2">
    <location>
        <begin position="927"/>
        <end position="938"/>
    </location>
</feature>
<feature type="compositionally biased region" description="Basic and acidic residues" evidence="2">
    <location>
        <begin position="1532"/>
        <end position="1545"/>
    </location>
</feature>
<feature type="compositionally biased region" description="Polar residues" evidence="2">
    <location>
        <begin position="1546"/>
        <end position="1558"/>
    </location>
</feature>
<feature type="compositionally biased region" description="Polar residues" evidence="2">
    <location>
        <begin position="1659"/>
        <end position="1670"/>
    </location>
</feature>
<feature type="modified residue" description="N-acetylalanine" evidence="19">
    <location>
        <position position="2"/>
    </location>
</feature>
<feature type="modified residue" description="Phosphoserine" evidence="23">
    <location>
        <position position="344"/>
    </location>
</feature>
<feature type="modified residue" description="Phosphoserine" evidence="20 21">
    <location>
        <position position="633"/>
    </location>
</feature>
<feature type="modified residue" description="Phosphoserine" evidence="20 21">
    <location>
        <position position="636"/>
    </location>
</feature>
<feature type="modified residue" description="Phosphoserine" evidence="23">
    <location>
        <position position="673"/>
    </location>
</feature>
<feature type="modified residue" description="Phosphoserine" evidence="23">
    <location>
        <position position="800"/>
    </location>
</feature>
<feature type="modified residue" description="Phosphoserine" evidence="1">
    <location>
        <position position="843"/>
    </location>
</feature>
<feature type="modified residue" description="Phosphoserine" evidence="17 18 20 21 22 23 24">
    <location>
        <position position="927"/>
    </location>
</feature>
<feature type="modified residue" description="Phosphoserine" evidence="23">
    <location>
        <position position="971"/>
    </location>
</feature>
<feature type="modified residue" description="Phosphoserine" evidence="20 23">
    <location>
        <position position="979"/>
    </location>
</feature>
<feature type="modified residue" description="Phosphothreonine" evidence="21">
    <location>
        <position position="982"/>
    </location>
</feature>
<feature type="modified residue" description="Phosphothreonine" evidence="23">
    <location>
        <position position="1049"/>
    </location>
</feature>
<feature type="modified residue" description="Phosphoserine" evidence="21 22 23 24">
    <location>
        <position position="1103"/>
    </location>
</feature>
<feature type="modified residue" description="Phosphoserine" evidence="23">
    <location>
        <position position="1552"/>
    </location>
</feature>
<feature type="cross-link" description="Glycyl lysine isopeptide (Lys-Gly) (interchain with G-Cter in SUMO2)" evidence="25">
    <location>
        <position position="586"/>
    </location>
</feature>
<feature type="cross-link" description="Glycyl lysine isopeptide (Lys-Gly) (interchain with G-Cter in SUMO2)" evidence="25">
    <location>
        <position position="823"/>
    </location>
</feature>
<feature type="cross-link" description="Glycyl lysine isopeptide (Lys-Gly) (interchain with G-Cter in SUMO2)" evidence="25">
    <location>
        <position position="832"/>
    </location>
</feature>
<feature type="cross-link" description="Glycyl lysine isopeptide (Lys-Gly) (interchain with G-Cter in SUMO2)" evidence="25">
    <location>
        <position position="872"/>
    </location>
</feature>
<feature type="splice variant" id="VSP_027030" description="In isoform 2." evidence="13">
    <location>
        <begin position="1"/>
        <end position="396"/>
    </location>
</feature>
<feature type="splice variant" id="VSP_027031" description="In isoform 4." evidence="11">
    <location>
        <begin position="921"/>
        <end position="981"/>
    </location>
</feature>
<feature type="splice variant" id="VSP_027032" description="In isoform 2." evidence="13">
    <location>
        <begin position="942"/>
        <end position="982"/>
    </location>
</feature>
<feature type="splice variant" id="VSP_027033" description="In isoform 3." evidence="12">
    <original>ALLENDEKDEEDMSLDSG</original>
    <variation>DAVLTLTPLELGVGISQH</variation>
    <location>
        <begin position="1495"/>
        <end position="1512"/>
    </location>
</feature>
<feature type="splice variant" id="VSP_027034" description="In isoform 3." evidence="12">
    <location>
        <begin position="1513"/>
        <end position="1670"/>
    </location>
</feature>
<feature type="sequence variant" id="VAR_059595" description="In dbSNP:rs958755.">
    <original>Q</original>
    <variation>P</variation>
    <location>
        <position position="38"/>
    </location>
</feature>
<feature type="sequence variant" id="VAR_033350" description="In dbSNP:rs17056999.">
    <original>A</original>
    <variation>G</variation>
    <location>
        <position position="831"/>
    </location>
</feature>
<feature type="sequence variant" id="VAR_055092" description="In dbSNP:rs2291498.">
    <original>V</original>
    <variation>I</variation>
    <location>
        <position position="998"/>
    </location>
</feature>
<feature type="sequence variant" id="VAR_033351" description="In dbSNP:rs9835332." evidence="3 4 5">
    <original>T</original>
    <variation>R</variation>
    <location>
        <position position="1046"/>
    </location>
</feature>
<feature type="sequence variant" id="VAR_033352" description="In dbSNP:rs2291498." evidence="4">
    <original>I</original>
    <variation>V</variation>
    <location>
        <position position="1435"/>
    </location>
</feature>
<feature type="sequence conflict" description="In Ref. 6; BAA83057." evidence="15" ref="6">
    <original>P</original>
    <variation>I</variation>
    <location>
        <position position="941"/>
    </location>
</feature>
<feature type="sequence conflict" description="In Ref. 1; AAD55098." evidence="15" ref="1">
    <original>N</original>
    <variation>S</variation>
    <location>
        <position position="1129"/>
    </location>
</feature>
<feature type="sequence conflict" description="In Ref. 1; AAD55098." evidence="15" ref="1">
    <original>E</original>
    <variation>G</variation>
    <location>
        <position position="1135"/>
    </location>
</feature>
<feature type="strand" evidence="27">
    <location>
        <begin position="113"/>
        <end position="115"/>
    </location>
</feature>
<feature type="helix" evidence="27">
    <location>
        <begin position="121"/>
        <end position="131"/>
    </location>
</feature>
<feature type="helix" evidence="27">
    <location>
        <begin position="137"/>
        <end position="141"/>
    </location>
</feature>
<feature type="strand" evidence="27">
    <location>
        <begin position="143"/>
        <end position="151"/>
    </location>
</feature>
<feature type="helix" evidence="27">
    <location>
        <begin position="154"/>
        <end position="169"/>
    </location>
</feature>
<feature type="helix" evidence="27">
    <location>
        <begin position="174"/>
        <end position="177"/>
    </location>
</feature>
<feature type="strand" evidence="27">
    <location>
        <begin position="180"/>
        <end position="186"/>
    </location>
</feature>
<feature type="turn" evidence="27">
    <location>
        <begin position="188"/>
        <end position="190"/>
    </location>
</feature>
<feature type="helix" evidence="27">
    <location>
        <begin position="191"/>
        <end position="197"/>
    </location>
</feature>
<feature type="turn" evidence="27">
    <location>
        <begin position="212"/>
        <end position="214"/>
    </location>
</feature>
<feature type="strand" evidence="27">
    <location>
        <begin position="215"/>
        <end position="221"/>
    </location>
</feature>
<feature type="strand" evidence="27">
    <location>
        <begin position="226"/>
        <end position="228"/>
    </location>
</feature>
<feature type="strand" evidence="27">
    <location>
        <begin position="235"/>
        <end position="243"/>
    </location>
</feature>
<feature type="strand" evidence="27">
    <location>
        <begin position="247"/>
        <end position="251"/>
    </location>
</feature>
<feature type="strand" evidence="27">
    <location>
        <begin position="255"/>
        <end position="257"/>
    </location>
</feature>
<feature type="strand" evidence="27">
    <location>
        <begin position="276"/>
        <end position="280"/>
    </location>
</feature>
<feature type="helix" evidence="27">
    <location>
        <begin position="283"/>
        <end position="285"/>
    </location>
</feature>
<feature type="helix" evidence="27">
    <location>
        <begin position="294"/>
        <end position="297"/>
    </location>
</feature>
<feature type="strand" evidence="27">
    <location>
        <begin position="299"/>
        <end position="302"/>
    </location>
</feature>
<feature type="strand" evidence="27">
    <location>
        <begin position="307"/>
        <end position="310"/>
    </location>
</feature>
<feature type="strand" evidence="27">
    <location>
        <begin position="317"/>
        <end position="327"/>
    </location>
</feature>
<feature type="helix" evidence="26">
    <location>
        <begin position="1016"/>
        <end position="1038"/>
    </location>
</feature>
<feature type="helix" evidence="26">
    <location>
        <begin position="1075"/>
        <end position="1091"/>
    </location>
</feature>
<comment type="function">
    <text evidence="1 6 7 8 9">Component of the HUSH complex, a multiprotein complex that mediates epigenetic repression (PubMed:26022416, PubMed:28581500). The HUSH complex is recruited to genomic loci rich in H3K9me3 and is required to maintain transcriptional silencing by promoting recruitment of SETDB1, a histone methyltransferase that mediates further deposition of H3K9me3, as well as MORC2 (PubMed:26022416, PubMed:28581500). Also represses L1 retrotransposons in collaboration with MORC2 and, probably, SETDB1, the silencing is dependent of repressive epigenetic modifications, such as H3K9me3 mark. Silencing events often occur within introns of transcriptionally active genes, and lead to the down-regulation of host gene expression (PubMed:29211708). The HUSH complex is also involved in the silencing of unintegrated retroviral DNA by being recruited by ZNF638: some part of the retroviral DNA formed immediately after infection remains unintegrated in the host genome and is transcriptionally repressed (PubMed:30487602). Plays a crucial role in early embryonic development (By similarity). Involved in the organization of spindle poles and spindle apparatus assembly during zygotic division (By similarity). Plays an important role in maintaining epiblast fitness or potency (By similarity).</text>
</comment>
<comment type="subunit">
    <text evidence="1 6 7 9">Component of the HUSH complex; at least composed of TASOR, PPHLN1 and MPHOSPH8 (PubMed:26022416). Interacts with MORC2; the interaction associateS MORC2 with the HUSH complex which recruits MORC2 to heterochromatic loci (PubMed:28581500). Interacts with ZNF638; leading to recruitment of the HUSH complex to unintegrated retroviral DNA (PubMed:30487602). Interacts with INPP5A, EML1, SV1L, GPSM2, ITGB3BP, CNTN1, ETFA, PSMD8, S100A10, MPHOSPH8, TMEM100, ALB, PARPBP, HCFC2, NCBP1 and SETDB1 (By similarity).</text>
</comment>
<comment type="interaction">
    <interactant intactId="EBI-308354">
        <id>Q9UK61</id>
    </interactant>
    <interactant intactId="EBI-2653928">
        <id>Q99549</id>
        <label>MPHOSPH8</label>
    </interactant>
    <organismsDiffer>false</organismsDiffer>
    <experiments>3</experiments>
</comment>
<comment type="subcellular location">
    <subcellularLocation>
        <location evidence="6 7">Nucleus</location>
    </subcellularLocation>
    <subcellularLocation>
        <location evidence="6 7">Chromosome</location>
    </subcellularLocation>
    <text evidence="6 7">Localizes to chromatin.</text>
</comment>
<comment type="alternative products">
    <event type="alternative splicing"/>
    <isoform>
        <id>Q9UK61-1</id>
        <name>1</name>
        <sequence type="displayed"/>
    </isoform>
    <isoform>
        <id>Q9UK61-2</id>
        <name>2</name>
        <sequence type="described" ref="VSP_027030 VSP_027032"/>
    </isoform>
    <isoform>
        <id>Q9UK61-3</id>
        <name>3</name>
        <sequence type="described" ref="VSP_027033 VSP_027034"/>
    </isoform>
    <isoform>
        <id>Q9UK61-4</id>
        <name>4</name>
        <sequence type="described" ref="VSP_027031"/>
    </isoform>
</comment>
<comment type="miscellaneous">
    <molecule>Isoform 1</molecule>
    <text evidence="15">Gene prediction based on partial mRNA data.</text>
</comment>
<comment type="similarity">
    <text evidence="15">Belongs to the TASOR family.</text>
</comment>
<comment type="sequence caution" evidence="15">
    <conflict type="erroneous initiation">
        <sequence resource="EMBL-CDS" id="AAG34913"/>
    </conflict>
    <text>Truncated N-terminus.</text>
</comment>
<comment type="sequence caution" evidence="15">
    <conflict type="erroneous initiation">
        <sequence resource="EMBL-CDS" id="AAI29988"/>
    </conflict>
    <text>Truncated N-terminus.</text>
</comment>
<evidence type="ECO:0000250" key="1">
    <source>
        <dbReference type="UniProtKB" id="Q69ZR9"/>
    </source>
</evidence>
<evidence type="ECO:0000256" key="2">
    <source>
        <dbReference type="SAM" id="MobiDB-lite"/>
    </source>
</evidence>
<evidence type="ECO:0000269" key="3">
    <source>
    </source>
</evidence>
<evidence type="ECO:0000269" key="4">
    <source>
    </source>
</evidence>
<evidence type="ECO:0000269" key="5">
    <source>
    </source>
</evidence>
<evidence type="ECO:0000269" key="6">
    <source>
    </source>
</evidence>
<evidence type="ECO:0000269" key="7">
    <source>
    </source>
</evidence>
<evidence type="ECO:0000269" key="8">
    <source>
    </source>
</evidence>
<evidence type="ECO:0000269" key="9">
    <source>
    </source>
</evidence>
<evidence type="ECO:0000303" key="10">
    <source>
    </source>
</evidence>
<evidence type="ECO:0000303" key="11">
    <source>
    </source>
</evidence>
<evidence type="ECO:0000303" key="12">
    <source>
    </source>
</evidence>
<evidence type="ECO:0000303" key="13">
    <source>
    </source>
</evidence>
<evidence type="ECO:0000303" key="14">
    <source>
    </source>
</evidence>
<evidence type="ECO:0000305" key="15"/>
<evidence type="ECO:0000312" key="16">
    <source>
        <dbReference type="HGNC" id="HGNC:30314"/>
    </source>
</evidence>
<evidence type="ECO:0007744" key="17">
    <source>
    </source>
</evidence>
<evidence type="ECO:0007744" key="18">
    <source>
    </source>
</evidence>
<evidence type="ECO:0007744" key="19">
    <source>
    </source>
</evidence>
<evidence type="ECO:0007744" key="20">
    <source>
    </source>
</evidence>
<evidence type="ECO:0007744" key="21">
    <source>
    </source>
</evidence>
<evidence type="ECO:0007744" key="22">
    <source>
    </source>
</evidence>
<evidence type="ECO:0007744" key="23">
    <source>
    </source>
</evidence>
<evidence type="ECO:0007744" key="24">
    <source>
    </source>
</evidence>
<evidence type="ECO:0007744" key="25">
    <source>
    </source>
</evidence>
<evidence type="ECO:0007829" key="26">
    <source>
        <dbReference type="PDB" id="6SWG"/>
    </source>
</evidence>
<evidence type="ECO:0007829" key="27">
    <source>
        <dbReference type="PDB" id="6TL1"/>
    </source>
</evidence>
<proteinExistence type="evidence at protein level"/>
<keyword id="KW-0002">3D-structure</keyword>
<keyword id="KW-0007">Acetylation</keyword>
<keyword id="KW-0025">Alternative splicing</keyword>
<keyword id="KW-0158">Chromosome</keyword>
<keyword id="KW-1017">Isopeptide bond</keyword>
<keyword id="KW-0539">Nucleus</keyword>
<keyword id="KW-0597">Phosphoprotein</keyword>
<keyword id="KW-1267">Proteomics identification</keyword>
<keyword id="KW-1185">Reference proteome</keyword>
<keyword id="KW-0678">Repressor</keyword>
<keyword id="KW-0804">Transcription</keyword>
<keyword id="KW-0805">Transcription regulation</keyword>
<keyword id="KW-0832">Ubl conjugation</keyword>
<name>TASOR_HUMAN</name>
<organism>
    <name type="scientific">Homo sapiens</name>
    <name type="common">Human</name>
    <dbReference type="NCBI Taxonomy" id="9606"/>
    <lineage>
        <taxon>Eukaryota</taxon>
        <taxon>Metazoa</taxon>
        <taxon>Chordata</taxon>
        <taxon>Craniata</taxon>
        <taxon>Vertebrata</taxon>
        <taxon>Euteleostomi</taxon>
        <taxon>Mammalia</taxon>
        <taxon>Eutheria</taxon>
        <taxon>Euarchontoglires</taxon>
        <taxon>Primates</taxon>
        <taxon>Haplorrhini</taxon>
        <taxon>Catarrhini</taxon>
        <taxon>Hominidae</taxon>
        <taxon>Homo</taxon>
    </lineage>
</organism>
<dbReference type="EMBL" id="AF180425">
    <property type="protein sequence ID" value="AAD55098.1"/>
    <property type="molecule type" value="mRNA"/>
</dbReference>
<dbReference type="EMBL" id="AC099781">
    <property type="status" value="NOT_ANNOTATED_CDS"/>
    <property type="molecule type" value="Genomic_DNA"/>
</dbReference>
<dbReference type="EMBL" id="AK094486">
    <property type="status" value="NOT_ANNOTATED_CDS"/>
    <property type="molecule type" value="mRNA"/>
</dbReference>
<dbReference type="EMBL" id="BC129987">
    <property type="protein sequence ID" value="AAI29988.1"/>
    <property type="status" value="ALT_INIT"/>
    <property type="molecule type" value="mRNA"/>
</dbReference>
<dbReference type="EMBL" id="AF273053">
    <property type="protein sequence ID" value="AAG34913.1"/>
    <property type="status" value="ALT_INIT"/>
    <property type="molecule type" value="mRNA"/>
</dbReference>
<dbReference type="EMBL" id="AB029028">
    <property type="protein sequence ID" value="BAA83057.1"/>
    <property type="molecule type" value="mRNA"/>
</dbReference>
<dbReference type="CCDS" id="CCDS2877.1">
    <molecule id="Q9UK61-2"/>
</dbReference>
<dbReference type="CCDS" id="CCDS46853.1">
    <molecule id="Q9UK61-3"/>
</dbReference>
<dbReference type="CCDS" id="CCDS87094.1">
    <molecule id="Q9UK61-4"/>
</dbReference>
<dbReference type="CCDS" id="CCDS93292.1">
    <molecule id="Q9UK61-1"/>
</dbReference>
<dbReference type="RefSeq" id="NP_001106207.1">
    <molecule id="Q9UK61-3"/>
    <property type="nucleotide sequence ID" value="NM_001112736.2"/>
</dbReference>
<dbReference type="RefSeq" id="NP_001350869.1">
    <molecule id="Q9UK61-4"/>
    <property type="nucleotide sequence ID" value="NM_001363940.1"/>
</dbReference>
<dbReference type="RefSeq" id="NP_001352564.1">
    <molecule id="Q9UK61-1"/>
    <property type="nucleotide sequence ID" value="NM_001365635.2"/>
</dbReference>
<dbReference type="RefSeq" id="NP_056039.2">
    <molecule id="Q9UK61-2"/>
    <property type="nucleotide sequence ID" value="NM_015224.3"/>
</dbReference>
<dbReference type="RefSeq" id="XP_005265056.1">
    <property type="nucleotide sequence ID" value="XM_005264999.1"/>
</dbReference>
<dbReference type="RefSeq" id="XP_011531854.1">
    <property type="nucleotide sequence ID" value="XM_011533552.2"/>
</dbReference>
<dbReference type="PDB" id="6SWG">
    <property type="method" value="X-ray"/>
    <property type="resolution" value="2.51 A"/>
    <property type="chains" value="C=1013-1095"/>
</dbReference>
<dbReference type="PDB" id="6TL1">
    <property type="method" value="X-ray"/>
    <property type="resolution" value="2.03 A"/>
    <property type="chains" value="A/B=110-332"/>
</dbReference>
<dbReference type="PDBsum" id="6SWG"/>
<dbReference type="PDBsum" id="6TL1"/>
<dbReference type="SMR" id="Q9UK61"/>
<dbReference type="BioGRID" id="116873">
    <property type="interactions" value="117"/>
</dbReference>
<dbReference type="ComplexPortal" id="CPX-2348">
    <property type="entry name" value="HUSH epigenetic repressor complex"/>
</dbReference>
<dbReference type="CORUM" id="Q9UK61"/>
<dbReference type="DIP" id="DIP-56150N"/>
<dbReference type="FunCoup" id="Q9UK61">
    <property type="interactions" value="2937"/>
</dbReference>
<dbReference type="IntAct" id="Q9UK61">
    <property type="interactions" value="77"/>
</dbReference>
<dbReference type="MINT" id="Q9UK61"/>
<dbReference type="STRING" id="9606.ENSP00000347845"/>
<dbReference type="GlyCosmos" id="Q9UK61">
    <property type="glycosylation" value="3 sites, 2 glycans"/>
</dbReference>
<dbReference type="GlyGen" id="Q9UK61">
    <property type="glycosylation" value="6 sites, 2 O-linked glycans (6 sites)"/>
</dbReference>
<dbReference type="iPTMnet" id="Q9UK61"/>
<dbReference type="PhosphoSitePlus" id="Q9UK61"/>
<dbReference type="SwissPalm" id="Q9UK61"/>
<dbReference type="BioMuta" id="FAM208A"/>
<dbReference type="DMDM" id="229462994"/>
<dbReference type="jPOST" id="Q9UK61"/>
<dbReference type="MassIVE" id="Q9UK61"/>
<dbReference type="PaxDb" id="9606-ENSP00000417509"/>
<dbReference type="PeptideAtlas" id="Q9UK61"/>
<dbReference type="ProteomicsDB" id="84729">
    <molecule id="Q9UK61-1"/>
</dbReference>
<dbReference type="ProteomicsDB" id="84730">
    <molecule id="Q9UK61-2"/>
</dbReference>
<dbReference type="ProteomicsDB" id="84731">
    <molecule id="Q9UK61-3"/>
</dbReference>
<dbReference type="ProteomicsDB" id="84732">
    <molecule id="Q9UK61-4"/>
</dbReference>
<dbReference type="Pumba" id="Q9UK61"/>
<dbReference type="Antibodypedia" id="1875">
    <property type="antibodies" value="30 antibodies from 13 providers"/>
</dbReference>
<dbReference type="DNASU" id="23272"/>
<dbReference type="Ensembl" id="ENST00000355628.9">
    <molecule id="Q9UK61-4"/>
    <property type="protein sequence ID" value="ENSP00000347845.5"/>
    <property type="gene ID" value="ENSG00000163946.14"/>
</dbReference>
<dbReference type="Ensembl" id="ENST00000431842.6">
    <molecule id="Q9UK61-2"/>
    <property type="protein sequence ID" value="ENSP00000399410.2"/>
    <property type="gene ID" value="ENSG00000163946.14"/>
</dbReference>
<dbReference type="Ensembl" id="ENST00000493960.6">
    <molecule id="Q9UK61-3"/>
    <property type="protein sequence ID" value="ENSP00000417509.2"/>
    <property type="gene ID" value="ENSG00000163946.14"/>
</dbReference>
<dbReference type="Ensembl" id="ENST00000683822.1">
    <molecule id="Q9UK61-1"/>
    <property type="protein sequence ID" value="ENSP00000508241.1"/>
    <property type="gene ID" value="ENSG00000163946.14"/>
</dbReference>
<dbReference type="GeneID" id="23272"/>
<dbReference type="KEGG" id="hsa:23272"/>
<dbReference type="MANE-Select" id="ENST00000683822.1">
    <property type="protein sequence ID" value="ENSP00000508241.1"/>
    <property type="RefSeq nucleotide sequence ID" value="NM_001365635.2"/>
    <property type="RefSeq protein sequence ID" value="NP_001352564.1"/>
</dbReference>
<dbReference type="UCSC" id="uc003dic.5">
    <molecule id="Q9UK61-1"/>
    <property type="organism name" value="human"/>
</dbReference>
<dbReference type="AGR" id="HGNC:30314"/>
<dbReference type="CTD" id="23272"/>
<dbReference type="DisGeNET" id="23272"/>
<dbReference type="GeneCards" id="TASOR"/>
<dbReference type="HGNC" id="HGNC:30314">
    <property type="gene designation" value="TASOR"/>
</dbReference>
<dbReference type="HPA" id="ENSG00000163946">
    <property type="expression patterns" value="Low tissue specificity"/>
</dbReference>
<dbReference type="MIM" id="616493">
    <property type="type" value="gene"/>
</dbReference>
<dbReference type="neXtProt" id="NX_Q9UK61"/>
<dbReference type="OpenTargets" id="ENSG00000163946"/>
<dbReference type="PharmGKB" id="PA128395774"/>
<dbReference type="VEuPathDB" id="HostDB:ENSG00000163946"/>
<dbReference type="eggNOG" id="ENOG502QUY9">
    <property type="taxonomic scope" value="Eukaryota"/>
</dbReference>
<dbReference type="GeneTree" id="ENSGT00530000063735"/>
<dbReference type="HOGENOM" id="CLU_004573_0_0_1"/>
<dbReference type="InParanoid" id="Q9UK61"/>
<dbReference type="OMA" id="MRQKHEY"/>
<dbReference type="OrthoDB" id="5960959at2759"/>
<dbReference type="PAN-GO" id="Q9UK61">
    <property type="GO annotations" value="6 GO annotations based on evolutionary models"/>
</dbReference>
<dbReference type="PhylomeDB" id="Q9UK61"/>
<dbReference type="TreeFam" id="TF336055"/>
<dbReference type="PathwayCommons" id="Q9UK61"/>
<dbReference type="Reactome" id="R-HSA-9843970">
    <property type="pathway name" value="Regulation of endogenous retroelements by the Human Silencing Hub (HUSH) complex"/>
</dbReference>
<dbReference type="SignaLink" id="Q9UK61"/>
<dbReference type="BioGRID-ORCS" id="23272">
    <property type="hits" value="29 hits in 1168 CRISPR screens"/>
</dbReference>
<dbReference type="ChiTaRS" id="FAM208A">
    <property type="organism name" value="human"/>
</dbReference>
<dbReference type="GenomeRNAi" id="23272"/>
<dbReference type="Pharos" id="Q9UK61">
    <property type="development level" value="Tbio"/>
</dbReference>
<dbReference type="PRO" id="PR:Q9UK61"/>
<dbReference type="Proteomes" id="UP000005640">
    <property type="component" value="Chromosome 3"/>
</dbReference>
<dbReference type="RNAct" id="Q9UK61">
    <property type="molecule type" value="protein"/>
</dbReference>
<dbReference type="Bgee" id="ENSG00000163946">
    <property type="expression patterns" value="Expressed in secondary oocyte and 208 other cell types or tissues"/>
</dbReference>
<dbReference type="ExpressionAtlas" id="Q9UK61">
    <property type="expression patterns" value="baseline and differential"/>
</dbReference>
<dbReference type="GO" id="GO:0000792">
    <property type="term" value="C:heterochromatin"/>
    <property type="evidence" value="ECO:0000314"/>
    <property type="project" value="UniProtKB"/>
</dbReference>
<dbReference type="GO" id="GO:0005654">
    <property type="term" value="C:nucleoplasm"/>
    <property type="evidence" value="ECO:0000314"/>
    <property type="project" value="HPA"/>
</dbReference>
<dbReference type="GO" id="GO:0003682">
    <property type="term" value="F:chromatin binding"/>
    <property type="evidence" value="ECO:0000314"/>
    <property type="project" value="UniProtKB"/>
</dbReference>
<dbReference type="GO" id="GO:0003723">
    <property type="term" value="F:RNA binding"/>
    <property type="evidence" value="ECO:0007005"/>
    <property type="project" value="UniProtKB"/>
</dbReference>
<dbReference type="GO" id="GO:0008595">
    <property type="term" value="P:anterior/posterior axis specification, embryo"/>
    <property type="evidence" value="ECO:0000250"/>
    <property type="project" value="UniProtKB"/>
</dbReference>
<dbReference type="GO" id="GO:0140719">
    <property type="term" value="P:constitutive heterochromatin formation"/>
    <property type="evidence" value="ECO:0000314"/>
    <property type="project" value="UniProtKB"/>
</dbReference>
<dbReference type="GO" id="GO:0060809">
    <property type="term" value="P:mesodermal to mesenchymal transition involved in gastrulation"/>
    <property type="evidence" value="ECO:0000250"/>
    <property type="project" value="UniProtKB"/>
</dbReference>
<dbReference type="GO" id="GO:0045814">
    <property type="term" value="P:negative regulation of gene expression, epigenetic"/>
    <property type="evidence" value="ECO:0000314"/>
    <property type="project" value="UniProtKB"/>
</dbReference>
<dbReference type="GO" id="GO:0097355">
    <property type="term" value="P:protein localization to heterochromatin"/>
    <property type="evidence" value="ECO:0000314"/>
    <property type="project" value="UniProtKB"/>
</dbReference>
<dbReference type="GO" id="GO:0141005">
    <property type="term" value="P:transposable element silencing by heterochromatin formation"/>
    <property type="evidence" value="ECO:0000314"/>
    <property type="project" value="UniProtKB"/>
</dbReference>
<dbReference type="CDD" id="cd22569">
    <property type="entry name" value="TASOR_PBD"/>
    <property type="match status" value="1"/>
</dbReference>
<dbReference type="InterPro" id="IPR056242">
    <property type="entry name" value="PIN_TASOR"/>
</dbReference>
<dbReference type="InterPro" id="IPR046432">
    <property type="entry name" value="TASOR"/>
</dbReference>
<dbReference type="InterPro" id="IPR056243">
    <property type="entry name" value="TASOR_ab_dom"/>
</dbReference>
<dbReference type="InterPro" id="IPR022188">
    <property type="entry name" value="TASOR_DUF3715"/>
</dbReference>
<dbReference type="PANTHER" id="PTHR16207:SF1">
    <property type="entry name" value="PROTEIN TASOR"/>
    <property type="match status" value="1"/>
</dbReference>
<dbReference type="PANTHER" id="PTHR16207">
    <property type="entry name" value="SET DOMAIN-CONTAINING PROTEIN"/>
    <property type="match status" value="1"/>
</dbReference>
<dbReference type="Pfam" id="PF12509">
    <property type="entry name" value="DUF3715"/>
    <property type="match status" value="1"/>
</dbReference>
<dbReference type="Pfam" id="PF24630">
    <property type="entry name" value="PIN_TASOR"/>
    <property type="match status" value="1"/>
</dbReference>
<dbReference type="Pfam" id="PF23314">
    <property type="entry name" value="TASOR_alpha-beta"/>
    <property type="match status" value="1"/>
</dbReference>
<reference key="1">
    <citation type="journal article" date="2000" name="Sci. China, Ser. C, Life Sci.">
        <title>Identification and cloning of the cDNA of a Rb-associated protein RAP140a.</title>
        <authorList>
            <person name="Li Q."/>
            <person name="Wen H."/>
            <person name="Ao S."/>
        </authorList>
    </citation>
    <scope>NUCLEOTIDE SEQUENCE [MRNA] (ISOFORM 2)</scope>
    <scope>VARIANT ARG-1046</scope>
    <source>
        <tissue>Fetal brain</tissue>
    </source>
</reference>
<reference key="2">
    <citation type="journal article" date="2006" name="Nature">
        <title>The DNA sequence, annotation and analysis of human chromosome 3.</title>
        <authorList>
            <person name="Muzny D.M."/>
            <person name="Scherer S.E."/>
            <person name="Kaul R."/>
            <person name="Wang J."/>
            <person name="Yu J."/>
            <person name="Sudbrak R."/>
            <person name="Buhay C.J."/>
            <person name="Chen R."/>
            <person name="Cree A."/>
            <person name="Ding Y."/>
            <person name="Dugan-Rocha S."/>
            <person name="Gill R."/>
            <person name="Gunaratne P."/>
            <person name="Harris R.A."/>
            <person name="Hawes A.C."/>
            <person name="Hernandez J."/>
            <person name="Hodgson A.V."/>
            <person name="Hume J."/>
            <person name="Jackson A."/>
            <person name="Khan Z.M."/>
            <person name="Kovar-Smith C."/>
            <person name="Lewis L.R."/>
            <person name="Lozado R.J."/>
            <person name="Metzker M.L."/>
            <person name="Milosavljevic A."/>
            <person name="Miner G.R."/>
            <person name="Morgan M.B."/>
            <person name="Nazareth L.V."/>
            <person name="Scott G."/>
            <person name="Sodergren E."/>
            <person name="Song X.-Z."/>
            <person name="Steffen D."/>
            <person name="Wei S."/>
            <person name="Wheeler D.A."/>
            <person name="Wright M.W."/>
            <person name="Worley K.C."/>
            <person name="Yuan Y."/>
            <person name="Zhang Z."/>
            <person name="Adams C.Q."/>
            <person name="Ansari-Lari M.A."/>
            <person name="Ayele M."/>
            <person name="Brown M.J."/>
            <person name="Chen G."/>
            <person name="Chen Z."/>
            <person name="Clendenning J."/>
            <person name="Clerc-Blankenburg K.P."/>
            <person name="Chen R."/>
            <person name="Chen Z."/>
            <person name="Davis C."/>
            <person name="Delgado O."/>
            <person name="Dinh H.H."/>
            <person name="Dong W."/>
            <person name="Draper H."/>
            <person name="Ernst S."/>
            <person name="Fu G."/>
            <person name="Gonzalez-Garay M.L."/>
            <person name="Garcia D.K."/>
            <person name="Gillett W."/>
            <person name="Gu J."/>
            <person name="Hao B."/>
            <person name="Haugen E."/>
            <person name="Havlak P."/>
            <person name="He X."/>
            <person name="Hennig S."/>
            <person name="Hu S."/>
            <person name="Huang W."/>
            <person name="Jackson L.R."/>
            <person name="Jacob L.S."/>
            <person name="Kelly S.H."/>
            <person name="Kube M."/>
            <person name="Levy R."/>
            <person name="Li Z."/>
            <person name="Liu B."/>
            <person name="Liu J."/>
            <person name="Liu W."/>
            <person name="Lu J."/>
            <person name="Maheshwari M."/>
            <person name="Nguyen B.-V."/>
            <person name="Okwuonu G.O."/>
            <person name="Palmeiri A."/>
            <person name="Pasternak S."/>
            <person name="Perez L.M."/>
            <person name="Phelps K.A."/>
            <person name="Plopper F.J."/>
            <person name="Qiang B."/>
            <person name="Raymond C."/>
            <person name="Rodriguez R."/>
            <person name="Saenphimmachak C."/>
            <person name="Santibanez J."/>
            <person name="Shen H."/>
            <person name="Shen Y."/>
            <person name="Subramanian S."/>
            <person name="Tabor P.E."/>
            <person name="Verduzco D."/>
            <person name="Waldron L."/>
            <person name="Wang J."/>
            <person name="Wang J."/>
            <person name="Wang Q."/>
            <person name="Williams G.A."/>
            <person name="Wong G.K.-S."/>
            <person name="Yao Z."/>
            <person name="Zhang J."/>
            <person name="Zhang X."/>
            <person name="Zhao G."/>
            <person name="Zhou J."/>
            <person name="Zhou Y."/>
            <person name="Nelson D."/>
            <person name="Lehrach H."/>
            <person name="Reinhardt R."/>
            <person name="Naylor S.L."/>
            <person name="Yang H."/>
            <person name="Olson M."/>
            <person name="Weinstock G."/>
            <person name="Gibbs R.A."/>
        </authorList>
    </citation>
    <scope>NUCLEOTIDE SEQUENCE [LARGE SCALE GENOMIC DNA]</scope>
</reference>
<reference key="3">
    <citation type="journal article" date="2004" name="Nat. Genet.">
        <title>Complete sequencing and characterization of 21,243 full-length human cDNAs.</title>
        <authorList>
            <person name="Ota T."/>
            <person name="Suzuki Y."/>
            <person name="Nishikawa T."/>
            <person name="Otsuki T."/>
            <person name="Sugiyama T."/>
            <person name="Irie R."/>
            <person name="Wakamatsu A."/>
            <person name="Hayashi K."/>
            <person name="Sato H."/>
            <person name="Nagai K."/>
            <person name="Kimura K."/>
            <person name="Makita H."/>
            <person name="Sekine M."/>
            <person name="Obayashi M."/>
            <person name="Nishi T."/>
            <person name="Shibahara T."/>
            <person name="Tanaka T."/>
            <person name="Ishii S."/>
            <person name="Yamamoto J."/>
            <person name="Saito K."/>
            <person name="Kawai Y."/>
            <person name="Isono Y."/>
            <person name="Nakamura Y."/>
            <person name="Nagahari K."/>
            <person name="Murakami K."/>
            <person name="Yasuda T."/>
            <person name="Iwayanagi T."/>
            <person name="Wagatsuma M."/>
            <person name="Shiratori A."/>
            <person name="Sudo H."/>
            <person name="Hosoiri T."/>
            <person name="Kaku Y."/>
            <person name="Kodaira H."/>
            <person name="Kondo H."/>
            <person name="Sugawara M."/>
            <person name="Takahashi M."/>
            <person name="Kanda K."/>
            <person name="Yokoi T."/>
            <person name="Furuya T."/>
            <person name="Kikkawa E."/>
            <person name="Omura Y."/>
            <person name="Abe K."/>
            <person name="Kamihara K."/>
            <person name="Katsuta N."/>
            <person name="Sato K."/>
            <person name="Tanikawa M."/>
            <person name="Yamazaki M."/>
            <person name="Ninomiya K."/>
            <person name="Ishibashi T."/>
            <person name="Yamashita H."/>
            <person name="Murakawa K."/>
            <person name="Fujimori K."/>
            <person name="Tanai H."/>
            <person name="Kimata M."/>
            <person name="Watanabe M."/>
            <person name="Hiraoka S."/>
            <person name="Chiba Y."/>
            <person name="Ishida S."/>
            <person name="Ono Y."/>
            <person name="Takiguchi S."/>
            <person name="Watanabe S."/>
            <person name="Yosida M."/>
            <person name="Hotuta T."/>
            <person name="Kusano J."/>
            <person name="Kanehori K."/>
            <person name="Takahashi-Fujii A."/>
            <person name="Hara H."/>
            <person name="Tanase T.-O."/>
            <person name="Nomura Y."/>
            <person name="Togiya S."/>
            <person name="Komai F."/>
            <person name="Hara R."/>
            <person name="Takeuchi K."/>
            <person name="Arita M."/>
            <person name="Imose N."/>
            <person name="Musashino K."/>
            <person name="Yuuki H."/>
            <person name="Oshima A."/>
            <person name="Sasaki N."/>
            <person name="Aotsuka S."/>
            <person name="Yoshikawa Y."/>
            <person name="Matsunawa H."/>
            <person name="Ichihara T."/>
            <person name="Shiohata N."/>
            <person name="Sano S."/>
            <person name="Moriya S."/>
            <person name="Momiyama H."/>
            <person name="Satoh N."/>
            <person name="Takami S."/>
            <person name="Terashima Y."/>
            <person name="Suzuki O."/>
            <person name="Nakagawa S."/>
            <person name="Senoh A."/>
            <person name="Mizoguchi H."/>
            <person name="Goto Y."/>
            <person name="Shimizu F."/>
            <person name="Wakebe H."/>
            <person name="Hishigaki H."/>
            <person name="Watanabe T."/>
            <person name="Sugiyama A."/>
            <person name="Takemoto M."/>
            <person name="Kawakami B."/>
            <person name="Yamazaki M."/>
            <person name="Watanabe K."/>
            <person name="Kumagai A."/>
            <person name="Itakura S."/>
            <person name="Fukuzumi Y."/>
            <person name="Fujimori Y."/>
            <person name="Komiyama M."/>
            <person name="Tashiro H."/>
            <person name="Tanigami A."/>
            <person name="Fujiwara T."/>
            <person name="Ono T."/>
            <person name="Yamada K."/>
            <person name="Fujii Y."/>
            <person name="Ozaki K."/>
            <person name="Hirao M."/>
            <person name="Ohmori Y."/>
            <person name="Kawabata A."/>
            <person name="Hikiji T."/>
            <person name="Kobatake N."/>
            <person name="Inagaki H."/>
            <person name="Ikema Y."/>
            <person name="Okamoto S."/>
            <person name="Okitani R."/>
            <person name="Kawakami T."/>
            <person name="Noguchi S."/>
            <person name="Itoh T."/>
            <person name="Shigeta K."/>
            <person name="Senba T."/>
            <person name="Matsumura K."/>
            <person name="Nakajima Y."/>
            <person name="Mizuno T."/>
            <person name="Morinaga M."/>
            <person name="Sasaki M."/>
            <person name="Togashi T."/>
            <person name="Oyama M."/>
            <person name="Hata H."/>
            <person name="Watanabe M."/>
            <person name="Komatsu T."/>
            <person name="Mizushima-Sugano J."/>
            <person name="Satoh T."/>
            <person name="Shirai Y."/>
            <person name="Takahashi Y."/>
            <person name="Nakagawa K."/>
            <person name="Okumura K."/>
            <person name="Nagase T."/>
            <person name="Nomura N."/>
            <person name="Kikuchi H."/>
            <person name="Masuho Y."/>
            <person name="Yamashita R."/>
            <person name="Nakai K."/>
            <person name="Yada T."/>
            <person name="Nakamura Y."/>
            <person name="Ohara O."/>
            <person name="Isogai T."/>
            <person name="Sugano S."/>
        </authorList>
    </citation>
    <scope>NUCLEOTIDE SEQUENCE [LARGE SCALE MRNA] OF 1-598 (ISOFORM 1)</scope>
    <source>
        <tissue>Cerebellum</tissue>
    </source>
</reference>
<reference key="4">
    <citation type="journal article" date="2004" name="Genome Res.">
        <title>The status, quality, and expansion of the NIH full-length cDNA project: the Mammalian Gene Collection (MGC).</title>
        <authorList>
            <consortium name="The MGC Project Team"/>
        </authorList>
    </citation>
    <scope>NUCLEOTIDE SEQUENCE [LARGE SCALE MRNA] OF 376-1670 (ISOFORM 3)</scope>
</reference>
<reference key="5">
    <citation type="journal article" date="2001" name="Proc. Natl. Acad. Sci. U.S.A.">
        <title>Serological detection of cutaneous T-cell lymphoma-associated antigens.</title>
        <authorList>
            <person name="Eichmueller S."/>
            <person name="Usener D."/>
            <person name="Dummer R."/>
            <person name="Stein A."/>
            <person name="Thiel D."/>
            <person name="Schadendorf D."/>
        </authorList>
    </citation>
    <scope>NUCLEOTIDE SEQUENCE [MRNA] OF 523-1274 (ISOFORM 4)</scope>
    <scope>VARIANTS ARG-1046 AND VAL-1435</scope>
    <source>
        <tissue>Testis</tissue>
    </source>
</reference>
<reference key="6">
    <citation type="journal article" date="1999" name="DNA Res.">
        <title>Prediction of the coding sequences of unidentified human genes. XIV. The complete sequences of 100 new cDNA clones from brain which code for large proteins in vitro.</title>
        <authorList>
            <person name="Kikuno R."/>
            <person name="Nagase T."/>
            <person name="Ishikawa K."/>
            <person name="Hirosawa M."/>
            <person name="Miyajima N."/>
            <person name="Tanaka A."/>
            <person name="Kotani H."/>
            <person name="Nomura N."/>
            <person name="Ohara O."/>
        </authorList>
    </citation>
    <scope>NUCLEOTIDE SEQUENCE [LARGE SCALE MRNA] OF 941-1274 (ISOFORM 1)</scope>
    <scope>VARIANT ARG-1046</scope>
    <source>
        <tissue>Brain</tissue>
    </source>
</reference>
<reference key="7">
    <citation type="journal article" date="2006" name="Cell">
        <title>Global, in vivo, and site-specific phosphorylation dynamics in signaling networks.</title>
        <authorList>
            <person name="Olsen J.V."/>
            <person name="Blagoev B."/>
            <person name="Gnad F."/>
            <person name="Macek B."/>
            <person name="Kumar C."/>
            <person name="Mortensen P."/>
            <person name="Mann M."/>
        </authorList>
    </citation>
    <scope>PHOSPHORYLATION [LARGE SCALE ANALYSIS] AT SER-927</scope>
    <scope>IDENTIFICATION BY MASS SPECTROMETRY [LARGE SCALE ANALYSIS]</scope>
    <source>
        <tissue>Cervix carcinoma</tissue>
    </source>
</reference>
<reference key="8">
    <citation type="journal article" date="2006" name="Nat. Biotechnol.">
        <title>A probability-based approach for high-throughput protein phosphorylation analysis and site localization.</title>
        <authorList>
            <person name="Beausoleil S.A."/>
            <person name="Villen J."/>
            <person name="Gerber S.A."/>
            <person name="Rush J."/>
            <person name="Gygi S.P."/>
        </authorList>
    </citation>
    <scope>PHOSPHORYLATION [LARGE SCALE ANALYSIS] AT SER-927</scope>
    <scope>IDENTIFICATION BY MASS SPECTROMETRY [LARGE SCALE ANALYSIS]</scope>
    <source>
        <tissue>Cervix carcinoma</tissue>
    </source>
</reference>
<reference key="9">
    <citation type="journal article" date="2008" name="Mol. Cell">
        <title>Kinase-selective enrichment enables quantitative phosphoproteomics of the kinome across the cell cycle.</title>
        <authorList>
            <person name="Daub H."/>
            <person name="Olsen J.V."/>
            <person name="Bairlein M."/>
            <person name="Gnad F."/>
            <person name="Oppermann F.S."/>
            <person name="Korner R."/>
            <person name="Greff Z."/>
            <person name="Keri G."/>
            <person name="Stemmann O."/>
            <person name="Mann M."/>
        </authorList>
    </citation>
    <scope>IDENTIFICATION BY MASS SPECTROMETRY [LARGE SCALE ANALYSIS]</scope>
    <source>
        <tissue>Cervix carcinoma</tissue>
    </source>
</reference>
<reference key="10">
    <citation type="journal article" date="2008" name="Proc. Natl. Acad. Sci. U.S.A.">
        <title>A quantitative atlas of mitotic phosphorylation.</title>
        <authorList>
            <person name="Dephoure N."/>
            <person name="Zhou C."/>
            <person name="Villen J."/>
            <person name="Beausoleil S.A."/>
            <person name="Bakalarski C.E."/>
            <person name="Elledge S.J."/>
            <person name="Gygi S.P."/>
        </authorList>
    </citation>
    <scope>IDENTIFICATION BY MASS SPECTROMETRY [LARGE SCALE ANALYSIS]</scope>
    <source>
        <tissue>Cervix carcinoma</tissue>
    </source>
</reference>
<reference key="11">
    <citation type="journal article" date="2009" name="Anal. Chem.">
        <title>Lys-N and trypsin cover complementary parts of the phosphoproteome in a refined SCX-based approach.</title>
        <authorList>
            <person name="Gauci S."/>
            <person name="Helbig A.O."/>
            <person name="Slijper M."/>
            <person name="Krijgsveld J."/>
            <person name="Heck A.J."/>
            <person name="Mohammed S."/>
        </authorList>
    </citation>
    <scope>ACETYLATION [LARGE SCALE ANALYSIS] AT ALA-2</scope>
    <scope>CLEAVAGE OF INITIATOR METHIONINE [LARGE SCALE ANALYSIS]</scope>
    <scope>IDENTIFICATION BY MASS SPECTROMETRY [LARGE SCALE ANALYSIS]</scope>
</reference>
<reference key="12">
    <citation type="journal article" date="2009" name="Sci. Signal.">
        <title>Quantitative phosphoproteomic analysis of T cell receptor signaling reveals system-wide modulation of protein-protein interactions.</title>
        <authorList>
            <person name="Mayya V."/>
            <person name="Lundgren D.H."/>
            <person name="Hwang S.-I."/>
            <person name="Rezaul K."/>
            <person name="Wu L."/>
            <person name="Eng J.K."/>
            <person name="Rodionov V."/>
            <person name="Han D.K."/>
        </authorList>
    </citation>
    <scope>PHOSPHORYLATION [LARGE SCALE ANALYSIS] AT SER-633; SER-636; SER-927 AND SER-979</scope>
    <scope>IDENTIFICATION BY MASS SPECTROMETRY [LARGE SCALE ANALYSIS]</scope>
    <source>
        <tissue>Leukemic T-cell</tissue>
    </source>
</reference>
<reference key="13">
    <citation type="journal article" date="2010" name="Sci. Signal.">
        <title>Quantitative phosphoproteomics reveals widespread full phosphorylation site occupancy during mitosis.</title>
        <authorList>
            <person name="Olsen J.V."/>
            <person name="Vermeulen M."/>
            <person name="Santamaria A."/>
            <person name="Kumar C."/>
            <person name="Miller M.L."/>
            <person name="Jensen L.J."/>
            <person name="Gnad F."/>
            <person name="Cox J."/>
            <person name="Jensen T.S."/>
            <person name="Nigg E.A."/>
            <person name="Brunak S."/>
            <person name="Mann M."/>
        </authorList>
    </citation>
    <scope>PHOSPHORYLATION [LARGE SCALE ANALYSIS] AT SER-633; SER-636; SER-927; THR-982 AND SER-1103</scope>
    <scope>IDENTIFICATION BY MASS SPECTROMETRY [LARGE SCALE ANALYSIS]</scope>
    <source>
        <tissue>Cervix carcinoma</tissue>
    </source>
</reference>
<reference key="14">
    <citation type="journal article" date="2011" name="Sci. Signal.">
        <title>System-wide temporal characterization of the proteome and phosphoproteome of human embryonic stem cell differentiation.</title>
        <authorList>
            <person name="Rigbolt K.T."/>
            <person name="Prokhorova T.A."/>
            <person name="Akimov V."/>
            <person name="Henningsen J."/>
            <person name="Johansen P.T."/>
            <person name="Kratchmarova I."/>
            <person name="Kassem M."/>
            <person name="Mann M."/>
            <person name="Olsen J.V."/>
            <person name="Blagoev B."/>
        </authorList>
    </citation>
    <scope>PHOSPHORYLATION [LARGE SCALE ANALYSIS] AT SER-927 AND SER-1103</scope>
    <scope>IDENTIFICATION BY MASS SPECTROMETRY [LARGE SCALE ANALYSIS]</scope>
</reference>
<reference key="15">
    <citation type="journal article" date="2013" name="J. Proteome Res.">
        <title>Toward a comprehensive characterization of a human cancer cell phosphoproteome.</title>
        <authorList>
            <person name="Zhou H."/>
            <person name="Di Palma S."/>
            <person name="Preisinger C."/>
            <person name="Peng M."/>
            <person name="Polat A.N."/>
            <person name="Heck A.J."/>
            <person name="Mohammed S."/>
        </authorList>
    </citation>
    <scope>PHOSPHORYLATION [LARGE SCALE ANALYSIS] AT SER-344; SER-673; SER-800; SER-927; SER-971; SER-979; THR-1049; SER-1103 AND SER-1552</scope>
    <scope>IDENTIFICATION BY MASS SPECTROMETRY [LARGE SCALE ANALYSIS]</scope>
    <source>
        <tissue>Cervix carcinoma</tissue>
        <tissue>Erythroleukemia</tissue>
    </source>
</reference>
<reference key="16">
    <citation type="journal article" date="2014" name="J. Proteomics">
        <title>An enzyme assisted RP-RPLC approach for in-depth analysis of human liver phosphoproteome.</title>
        <authorList>
            <person name="Bian Y."/>
            <person name="Song C."/>
            <person name="Cheng K."/>
            <person name="Dong M."/>
            <person name="Wang F."/>
            <person name="Huang J."/>
            <person name="Sun D."/>
            <person name="Wang L."/>
            <person name="Ye M."/>
            <person name="Zou H."/>
        </authorList>
    </citation>
    <scope>PHOSPHORYLATION [LARGE SCALE ANALYSIS] AT SER-927 AND SER-1103</scope>
    <scope>IDENTIFICATION BY MASS SPECTROMETRY [LARGE SCALE ANALYSIS]</scope>
    <source>
        <tissue>Liver</tissue>
    </source>
</reference>
<reference key="17">
    <citation type="journal article" date="2015" name="Science">
        <title>Epigenetic silencing by the HUSH complex mediates position-effect variegation in human cells.</title>
        <authorList>
            <person name="Tchasovnikarova I.A."/>
            <person name="Timms R.T."/>
            <person name="Matheson N.J."/>
            <person name="Wals K."/>
            <person name="Antrobus R."/>
            <person name="Goettgens B."/>
            <person name="Dougan G."/>
            <person name="Dawson M.A."/>
            <person name="Lehner P.J."/>
        </authorList>
    </citation>
    <scope>FUNCTION</scope>
    <scope>SUBCELLULAR LOCATION</scope>
    <scope>IDENTIFICATION IN THE HUSH COMPLEX</scope>
</reference>
<reference key="18">
    <citation type="journal article" date="2017" name="Nat. Genet.">
        <title>Hyperactivation of HUSH complex function by Charcot-Marie-Tooth disease mutation in MORC2.</title>
        <authorList>
            <person name="Tchasovnikarova I.A."/>
            <person name="Timms R.T."/>
            <person name="Douse C.H."/>
            <person name="Roberts R.C."/>
            <person name="Dougan G."/>
            <person name="Kingston R.E."/>
            <person name="Modis Y."/>
            <person name="Lehner P.J."/>
        </authorList>
    </citation>
    <scope>FUNCTION</scope>
    <scope>SUBCELLULAR LOCATION</scope>
    <scope>INTERACTION WITH MORC2</scope>
</reference>
<reference key="19">
    <citation type="journal article" date="2017" name="Nat. Struct. Mol. Biol.">
        <title>Site-specific mapping of the human SUMO proteome reveals co-modification with phosphorylation.</title>
        <authorList>
            <person name="Hendriks I.A."/>
            <person name="Lyon D."/>
            <person name="Young C."/>
            <person name="Jensen L.J."/>
            <person name="Vertegaal A.C."/>
            <person name="Nielsen M.L."/>
        </authorList>
    </citation>
    <scope>SUMOYLATION [LARGE SCALE ANALYSIS] AT LYS-586; LYS-823; LYS-832 AND LYS-872</scope>
    <scope>IDENTIFICATION BY MASS SPECTROMETRY [LARGE SCALE ANALYSIS]</scope>
</reference>
<reference key="20">
    <citation type="journal article" date="2018" name="Nature">
        <title>Selective silencing of euchromatic L1s revealed by genome-wide screens for L1 regulators.</title>
        <authorList>
            <person name="Liu N."/>
            <person name="Lee C.H."/>
            <person name="Swigut T."/>
            <person name="Grow E."/>
            <person name="Gu B."/>
            <person name="Bassik M.C."/>
            <person name="Wysocka J."/>
        </authorList>
    </citation>
    <scope>FUNCTION</scope>
</reference>
<reference key="21">
    <citation type="journal article" date="2018" name="Nature">
        <title>NP220 mediates silencing of unintegrated retroviral DNA.</title>
        <authorList>
            <person name="Zhu Y."/>
            <person name="Wang G.Z."/>
            <person name="Cingoez O."/>
            <person name="Goff S.P."/>
        </authorList>
    </citation>
    <scope>FUNCTION</scope>
    <scope>INTERACTION WITH ZNF638</scope>
</reference>
<protein>
    <recommendedName>
        <fullName evidence="15">Protein TASOR</fullName>
    </recommendedName>
    <alternativeName>
        <fullName evidence="11">CTCL tumor antigen se89-1</fullName>
    </alternativeName>
    <alternativeName>
        <fullName evidence="13">Retinoblastoma-associated protein RAP140</fullName>
    </alternativeName>
    <alternativeName>
        <fullName evidence="14">Transgene activation suppressor protein</fullName>
    </alternativeName>
</protein>